<evidence type="ECO:0000255" key="1"/>
<evidence type="ECO:0000256" key="2">
    <source>
        <dbReference type="SAM" id="MobiDB-lite"/>
    </source>
</evidence>
<evidence type="ECO:0000269" key="3">
    <source>
    </source>
</evidence>
<evidence type="ECO:0000269" key="4">
    <source>
    </source>
</evidence>
<evidence type="ECO:0000303" key="5">
    <source>
    </source>
</evidence>
<evidence type="ECO:0000305" key="6"/>
<evidence type="ECO:0000305" key="7">
    <source>
    </source>
</evidence>
<feature type="chain" id="PRO_0000437599" description="Efflux pump terG">
    <location>
        <begin position="1"/>
        <end position="531"/>
    </location>
</feature>
<feature type="transmembrane region" description="Helical" evidence="1">
    <location>
        <begin position="86"/>
        <end position="106"/>
    </location>
</feature>
<feature type="transmembrane region" description="Helical" evidence="1">
    <location>
        <begin position="117"/>
        <end position="137"/>
    </location>
</feature>
<feature type="transmembrane region" description="Helical" evidence="1">
    <location>
        <begin position="145"/>
        <end position="165"/>
    </location>
</feature>
<feature type="transmembrane region" description="Helical" evidence="1">
    <location>
        <begin position="179"/>
        <end position="199"/>
    </location>
</feature>
<feature type="transmembrane region" description="Helical" evidence="1">
    <location>
        <begin position="207"/>
        <end position="227"/>
    </location>
</feature>
<feature type="transmembrane region" description="Helical" evidence="1">
    <location>
        <begin position="249"/>
        <end position="269"/>
    </location>
</feature>
<feature type="transmembrane region" description="Helical" evidence="1">
    <location>
        <begin position="280"/>
        <end position="300"/>
    </location>
</feature>
<feature type="transmembrane region" description="Helical" evidence="1">
    <location>
        <begin position="319"/>
        <end position="339"/>
    </location>
</feature>
<feature type="transmembrane region" description="Helical" evidence="1">
    <location>
        <begin position="351"/>
        <end position="371"/>
    </location>
</feature>
<feature type="transmembrane region" description="Helical" evidence="1">
    <location>
        <begin position="380"/>
        <end position="400"/>
    </location>
</feature>
<feature type="transmembrane region" description="Helical" evidence="1">
    <location>
        <begin position="402"/>
        <end position="422"/>
    </location>
</feature>
<feature type="transmembrane region" description="Helical" evidence="1">
    <location>
        <begin position="447"/>
        <end position="467"/>
    </location>
</feature>
<feature type="transmembrane region" description="Helical" evidence="1">
    <location>
        <begin position="488"/>
        <end position="508"/>
    </location>
</feature>
<feature type="region of interest" description="Disordered" evidence="2">
    <location>
        <begin position="1"/>
        <end position="27"/>
    </location>
</feature>
<feature type="compositionally biased region" description="Polar residues" evidence="2">
    <location>
        <begin position="1"/>
        <end position="11"/>
    </location>
</feature>
<proteinExistence type="evidence at transcript level"/>
<accession>Q0D1P6</accession>
<reference key="1">
    <citation type="submission" date="2005-09" db="EMBL/GenBank/DDBJ databases">
        <title>Annotation of the Aspergillus terreus NIH2624 genome.</title>
        <authorList>
            <person name="Birren B.W."/>
            <person name="Lander E.S."/>
            <person name="Galagan J.E."/>
            <person name="Nusbaum C."/>
            <person name="Devon K."/>
            <person name="Henn M."/>
            <person name="Ma L.-J."/>
            <person name="Jaffe D.B."/>
            <person name="Butler J."/>
            <person name="Alvarez P."/>
            <person name="Gnerre S."/>
            <person name="Grabherr M."/>
            <person name="Kleber M."/>
            <person name="Mauceli E.W."/>
            <person name="Brockman W."/>
            <person name="Rounsley S."/>
            <person name="Young S.K."/>
            <person name="LaButti K."/>
            <person name="Pushparaj V."/>
            <person name="DeCaprio D."/>
            <person name="Crawford M."/>
            <person name="Koehrsen M."/>
            <person name="Engels R."/>
            <person name="Montgomery P."/>
            <person name="Pearson M."/>
            <person name="Howarth C."/>
            <person name="Larson L."/>
            <person name="Luoma S."/>
            <person name="White J."/>
            <person name="Alvarado L."/>
            <person name="Kodira C.D."/>
            <person name="Zeng Q."/>
            <person name="Oleary S."/>
            <person name="Yandava C."/>
            <person name="Denning D.W."/>
            <person name="Nierman W.C."/>
            <person name="Milne T."/>
            <person name="Madden K."/>
        </authorList>
    </citation>
    <scope>NUCLEOTIDE SEQUENCE [LARGE SCALE GENOMIC DNA]</scope>
    <source>
        <strain>NIH 2624 / FGSC A1156</strain>
    </source>
</reference>
<reference key="2">
    <citation type="journal article" date="2014" name="Chem. Biol.">
        <title>Terrein biosynthesis in Aspergillus terreus and its impact on phytotoxicity.</title>
        <authorList>
            <person name="Zaehle C."/>
            <person name="Gressler M."/>
            <person name="Shelest E."/>
            <person name="Geib E."/>
            <person name="Hertweck C."/>
            <person name="Brock M."/>
        </authorList>
    </citation>
    <scope>FUNCTION</scope>
</reference>
<reference key="3">
    <citation type="journal article" date="2015" name="Front. Microbiol.">
        <title>A new high-performance heterologous fungal expression system based on regulatory elements from the Aspergillus terreus terrein gene cluster.</title>
        <authorList>
            <person name="Gressler M."/>
            <person name="Hortschansky P."/>
            <person name="Geib E."/>
            <person name="Brock M."/>
        </authorList>
    </citation>
    <scope>INDUCTION</scope>
</reference>
<gene>
    <name evidence="5" type="primary">terG</name>
    <name type="ORF">ATEG_00138</name>
</gene>
<protein>
    <recommendedName>
        <fullName evidence="7">Efflux pump terG</fullName>
    </recommendedName>
    <alternativeName>
        <fullName evidence="5">Terrein biosynthesis cluster protein terG</fullName>
    </alternativeName>
</protein>
<keyword id="KW-1003">Cell membrane</keyword>
<keyword id="KW-0472">Membrane</keyword>
<keyword id="KW-1185">Reference proteome</keyword>
<keyword id="KW-0812">Transmembrane</keyword>
<keyword id="KW-1133">Transmembrane helix</keyword>
<keyword id="KW-0813">Transport</keyword>
<sequence length="531" mass="57837">MSSSTLEGQETASHHSKNSPSRHGDDGGLQTAGDEYVYIADHYGMVRRMIFIMTVCSSMFTNQLGLCNSLSTLEEIGESFGVTDPGKLSWTISGYGLTLGTFILIGGRLGDEFGNKAIFVIGMGWLALTSMMAGVSVYAGYPVYILARVLQGLGPALTVPNALAIMGKCFSEHPRNMGFAWFAASAPVGAMAGLLFGPLFTMAWWPWIYWSQALGVAFVFALSIVAIPNMPAESEQKQRRTILEILERIDLLGGACGVTALVLFNFAWNQSLVATWKEPYVYVCLILSFLFLAAFFYVELRVARHPILPVAVLTSDIAFVFGCTAAGWSTFGIWLFYVIRICLNIGGQTPIQMAAWLSPILVTGIGTALIVGKIITKVPASSIMLFAMLCYFITSLLMALRPVHSIYWTYFFFATIIATFAMDSSLPAATIIFANAVPRQYQGMGSSVIMTIVVYSISLGLGFAGTIELQINNGGHTKADLLHGYRGTLWFSVGLTAFGTVLALIFLLKDLRRRKLARTQVEEEKGHSSEA</sequence>
<dbReference type="EMBL" id="CH476594">
    <property type="protein sequence ID" value="EAU38784.1"/>
    <property type="molecule type" value="Genomic_DNA"/>
</dbReference>
<dbReference type="RefSeq" id="XP_001210224.1">
    <property type="nucleotide sequence ID" value="XM_001210224.1"/>
</dbReference>
<dbReference type="SMR" id="Q0D1P6"/>
<dbReference type="STRING" id="341663.Q0D1P6"/>
<dbReference type="EnsemblFungi" id="EAU38784">
    <property type="protein sequence ID" value="EAU38784"/>
    <property type="gene ID" value="ATEG_00138"/>
</dbReference>
<dbReference type="GeneID" id="4354895"/>
<dbReference type="VEuPathDB" id="FungiDB:ATEG_00138"/>
<dbReference type="eggNOG" id="KOG0254">
    <property type="taxonomic scope" value="Eukaryota"/>
</dbReference>
<dbReference type="HOGENOM" id="CLU_000960_27_4_1"/>
<dbReference type="OMA" id="CSSMFTN"/>
<dbReference type="OrthoDB" id="2428527at2759"/>
<dbReference type="Proteomes" id="UP000007963">
    <property type="component" value="Unassembled WGS sequence"/>
</dbReference>
<dbReference type="GO" id="GO:0005886">
    <property type="term" value="C:plasma membrane"/>
    <property type="evidence" value="ECO:0007669"/>
    <property type="project" value="UniProtKB-SubCell"/>
</dbReference>
<dbReference type="GO" id="GO:0022857">
    <property type="term" value="F:transmembrane transporter activity"/>
    <property type="evidence" value="ECO:0007669"/>
    <property type="project" value="InterPro"/>
</dbReference>
<dbReference type="CDD" id="cd17476">
    <property type="entry name" value="MFS_Amf1_MDR_like"/>
    <property type="match status" value="1"/>
</dbReference>
<dbReference type="FunFam" id="1.20.1250.20:FF:000285">
    <property type="entry name" value="MFS general substrate transporter"/>
    <property type="match status" value="1"/>
</dbReference>
<dbReference type="Gene3D" id="1.20.1250.20">
    <property type="entry name" value="MFS general substrate transporter like domains"/>
    <property type="match status" value="1"/>
</dbReference>
<dbReference type="Gene3D" id="1.20.1720.10">
    <property type="entry name" value="Multidrug resistance protein D"/>
    <property type="match status" value="1"/>
</dbReference>
<dbReference type="InterPro" id="IPR011701">
    <property type="entry name" value="MFS"/>
</dbReference>
<dbReference type="InterPro" id="IPR020846">
    <property type="entry name" value="MFS_dom"/>
</dbReference>
<dbReference type="InterPro" id="IPR036259">
    <property type="entry name" value="MFS_trans_sf"/>
</dbReference>
<dbReference type="PANTHER" id="PTHR42718:SF1">
    <property type="entry name" value="LOW AFFINITY AMMONIUM TRANSPORTER"/>
    <property type="match status" value="1"/>
</dbReference>
<dbReference type="PANTHER" id="PTHR42718">
    <property type="entry name" value="MAJOR FACILITATOR SUPERFAMILY MULTIDRUG TRANSPORTER MFSC"/>
    <property type="match status" value="1"/>
</dbReference>
<dbReference type="Pfam" id="PF07690">
    <property type="entry name" value="MFS_1"/>
    <property type="match status" value="1"/>
</dbReference>
<dbReference type="SUPFAM" id="SSF103473">
    <property type="entry name" value="MFS general substrate transporter"/>
    <property type="match status" value="1"/>
</dbReference>
<dbReference type="PROSITE" id="PS50850">
    <property type="entry name" value="MFS"/>
    <property type="match status" value="1"/>
</dbReference>
<name>TERG_ASPTN</name>
<organism>
    <name type="scientific">Aspergillus terreus (strain NIH 2624 / FGSC A1156)</name>
    <dbReference type="NCBI Taxonomy" id="341663"/>
    <lineage>
        <taxon>Eukaryota</taxon>
        <taxon>Fungi</taxon>
        <taxon>Dikarya</taxon>
        <taxon>Ascomycota</taxon>
        <taxon>Pezizomycotina</taxon>
        <taxon>Eurotiomycetes</taxon>
        <taxon>Eurotiomycetidae</taxon>
        <taxon>Eurotiales</taxon>
        <taxon>Aspergillaceae</taxon>
        <taxon>Aspergillus</taxon>
        <taxon>Aspergillus subgen. Circumdati</taxon>
    </lineage>
</organism>
<comment type="function">
    <text evidence="3">Efflux pump that might be required for efficient secretion of terrein or other secondary metabolies produced by the terrein genne cluster (PubMed:24816227).</text>
</comment>
<comment type="subcellular location">
    <subcellularLocation>
        <location evidence="6">Cell membrane</location>
        <topology evidence="1">Multi-pass membrane protein</topology>
    </subcellularLocation>
</comment>
<comment type="induction">
    <text evidence="4">Expression is under the control of the terrein cluster-specific transcription factor terR (PubMed:25852654).</text>
</comment>
<comment type="similarity">
    <text evidence="6">Belongs to the major facilitator superfamily.</text>
</comment>